<dbReference type="EC" id="2.7.7.56" evidence="1"/>
<dbReference type="EMBL" id="CR954246">
    <property type="protein sequence ID" value="CAI87831.1"/>
    <property type="molecule type" value="Genomic_DNA"/>
</dbReference>
<dbReference type="SMR" id="Q3IJI0"/>
<dbReference type="STRING" id="326442.PSHAa2788"/>
<dbReference type="KEGG" id="pha:PSHAa2788"/>
<dbReference type="eggNOG" id="COG0689">
    <property type="taxonomic scope" value="Bacteria"/>
</dbReference>
<dbReference type="HOGENOM" id="CLU_050858_0_0_6"/>
<dbReference type="BioCyc" id="PHAL326442:PSHA_RS13695-MONOMER"/>
<dbReference type="Proteomes" id="UP000006843">
    <property type="component" value="Chromosome I"/>
</dbReference>
<dbReference type="GO" id="GO:0000175">
    <property type="term" value="F:3'-5'-RNA exonuclease activity"/>
    <property type="evidence" value="ECO:0007669"/>
    <property type="project" value="UniProtKB-UniRule"/>
</dbReference>
<dbReference type="GO" id="GO:0000049">
    <property type="term" value="F:tRNA binding"/>
    <property type="evidence" value="ECO:0007669"/>
    <property type="project" value="UniProtKB-UniRule"/>
</dbReference>
<dbReference type="GO" id="GO:0009022">
    <property type="term" value="F:tRNA nucleotidyltransferase activity"/>
    <property type="evidence" value="ECO:0007669"/>
    <property type="project" value="UniProtKB-UniRule"/>
</dbReference>
<dbReference type="GO" id="GO:0016075">
    <property type="term" value="P:rRNA catabolic process"/>
    <property type="evidence" value="ECO:0007669"/>
    <property type="project" value="UniProtKB-UniRule"/>
</dbReference>
<dbReference type="GO" id="GO:0006364">
    <property type="term" value="P:rRNA processing"/>
    <property type="evidence" value="ECO:0007669"/>
    <property type="project" value="UniProtKB-KW"/>
</dbReference>
<dbReference type="GO" id="GO:0008033">
    <property type="term" value="P:tRNA processing"/>
    <property type="evidence" value="ECO:0007669"/>
    <property type="project" value="UniProtKB-UniRule"/>
</dbReference>
<dbReference type="CDD" id="cd11362">
    <property type="entry name" value="RNase_PH_bact"/>
    <property type="match status" value="1"/>
</dbReference>
<dbReference type="FunFam" id="3.30.230.70:FF:000003">
    <property type="entry name" value="Ribonuclease PH"/>
    <property type="match status" value="1"/>
</dbReference>
<dbReference type="Gene3D" id="3.30.230.70">
    <property type="entry name" value="GHMP Kinase, N-terminal domain"/>
    <property type="match status" value="1"/>
</dbReference>
<dbReference type="HAMAP" id="MF_00564">
    <property type="entry name" value="RNase_PH"/>
    <property type="match status" value="1"/>
</dbReference>
<dbReference type="InterPro" id="IPR001247">
    <property type="entry name" value="ExoRNase_PH_dom1"/>
</dbReference>
<dbReference type="InterPro" id="IPR015847">
    <property type="entry name" value="ExoRNase_PH_dom2"/>
</dbReference>
<dbReference type="InterPro" id="IPR036345">
    <property type="entry name" value="ExoRNase_PH_dom2_sf"/>
</dbReference>
<dbReference type="InterPro" id="IPR027408">
    <property type="entry name" value="PNPase/RNase_PH_dom_sf"/>
</dbReference>
<dbReference type="InterPro" id="IPR020568">
    <property type="entry name" value="Ribosomal_Su5_D2-typ_SF"/>
</dbReference>
<dbReference type="InterPro" id="IPR050080">
    <property type="entry name" value="RNase_PH"/>
</dbReference>
<dbReference type="InterPro" id="IPR002381">
    <property type="entry name" value="RNase_PH_bac-type"/>
</dbReference>
<dbReference type="InterPro" id="IPR018336">
    <property type="entry name" value="RNase_PH_CS"/>
</dbReference>
<dbReference type="NCBIfam" id="TIGR01966">
    <property type="entry name" value="RNasePH"/>
    <property type="match status" value="1"/>
</dbReference>
<dbReference type="PANTHER" id="PTHR11953">
    <property type="entry name" value="EXOSOME COMPLEX COMPONENT"/>
    <property type="match status" value="1"/>
</dbReference>
<dbReference type="PANTHER" id="PTHR11953:SF0">
    <property type="entry name" value="EXOSOME COMPLEX COMPONENT RRP41"/>
    <property type="match status" value="1"/>
</dbReference>
<dbReference type="Pfam" id="PF01138">
    <property type="entry name" value="RNase_PH"/>
    <property type="match status" value="1"/>
</dbReference>
<dbReference type="Pfam" id="PF03725">
    <property type="entry name" value="RNase_PH_C"/>
    <property type="match status" value="1"/>
</dbReference>
<dbReference type="SUPFAM" id="SSF55666">
    <property type="entry name" value="Ribonuclease PH domain 2-like"/>
    <property type="match status" value="1"/>
</dbReference>
<dbReference type="SUPFAM" id="SSF54211">
    <property type="entry name" value="Ribosomal protein S5 domain 2-like"/>
    <property type="match status" value="1"/>
</dbReference>
<dbReference type="PROSITE" id="PS01277">
    <property type="entry name" value="RIBONUCLEASE_PH"/>
    <property type="match status" value="1"/>
</dbReference>
<comment type="function">
    <text evidence="1">Phosphorolytic 3'-5' exoribonuclease that plays an important role in tRNA 3'-end maturation. Removes nucleotide residues following the 3'-CCA terminus of tRNAs; can also add nucleotides to the ends of RNA molecules by using nucleoside diphosphates as substrates, but this may not be physiologically important. Probably plays a role in initiation of 16S rRNA degradation (leading to ribosome degradation) during starvation.</text>
</comment>
<comment type="catalytic activity">
    <reaction evidence="1">
        <text>tRNA(n+1) + phosphate = tRNA(n) + a ribonucleoside 5'-diphosphate</text>
        <dbReference type="Rhea" id="RHEA:10628"/>
        <dbReference type="Rhea" id="RHEA-COMP:17343"/>
        <dbReference type="Rhea" id="RHEA-COMP:17344"/>
        <dbReference type="ChEBI" id="CHEBI:43474"/>
        <dbReference type="ChEBI" id="CHEBI:57930"/>
        <dbReference type="ChEBI" id="CHEBI:173114"/>
        <dbReference type="EC" id="2.7.7.56"/>
    </reaction>
</comment>
<comment type="subunit">
    <text evidence="1">Homohexameric ring arranged as a trimer of dimers.</text>
</comment>
<comment type="similarity">
    <text evidence="1">Belongs to the RNase PH family.</text>
</comment>
<proteinExistence type="inferred from homology"/>
<protein>
    <recommendedName>
        <fullName evidence="1">Ribonuclease PH</fullName>
        <shortName evidence="1">RNase PH</shortName>
        <ecNumber evidence="1">2.7.7.56</ecNumber>
    </recommendedName>
    <alternativeName>
        <fullName evidence="1">tRNA nucleotidyltransferase</fullName>
    </alternativeName>
</protein>
<organism>
    <name type="scientific">Pseudoalteromonas translucida (strain TAC 125)</name>
    <dbReference type="NCBI Taxonomy" id="326442"/>
    <lineage>
        <taxon>Bacteria</taxon>
        <taxon>Pseudomonadati</taxon>
        <taxon>Pseudomonadota</taxon>
        <taxon>Gammaproteobacteria</taxon>
        <taxon>Alteromonadales</taxon>
        <taxon>Pseudoalteromonadaceae</taxon>
        <taxon>Pseudoalteromonas</taxon>
    </lineage>
</organism>
<feature type="chain" id="PRO_1000024850" description="Ribonuclease PH">
    <location>
        <begin position="1"/>
        <end position="237"/>
    </location>
</feature>
<feature type="binding site" evidence="1">
    <location>
        <position position="86"/>
    </location>
    <ligand>
        <name>phosphate</name>
        <dbReference type="ChEBI" id="CHEBI:43474"/>
        <note>substrate</note>
    </ligand>
</feature>
<feature type="binding site" evidence="1">
    <location>
        <begin position="124"/>
        <end position="126"/>
    </location>
    <ligand>
        <name>phosphate</name>
        <dbReference type="ChEBI" id="CHEBI:43474"/>
        <note>substrate</note>
    </ligand>
</feature>
<accession>Q3IJI0</accession>
<evidence type="ECO:0000255" key="1">
    <source>
        <dbReference type="HAMAP-Rule" id="MF_00564"/>
    </source>
</evidence>
<sequence length="237" mass="25738">MRPSERTANQIRPVTFTRNYTLHAEGSVLVEFGNTKVLCTATVESGVPRFMKGQGKGWINAEYGMLPRATHTRNAREAARGKQGGRTMEIQRLIARALRAAVDLKALGENTITIDCDVIQADGGTRTASISGACVALVDALTHMRAKGMINSNPLKYMIAAISVGIYKGQAISDLEYIEDSAAETDMNVILTETGKIIEIQGTAEGEPFSFDELDELLTLAKHSIREIIDVQKQALA</sequence>
<keyword id="KW-0548">Nucleotidyltransferase</keyword>
<keyword id="KW-1185">Reference proteome</keyword>
<keyword id="KW-0694">RNA-binding</keyword>
<keyword id="KW-0698">rRNA processing</keyword>
<keyword id="KW-0808">Transferase</keyword>
<keyword id="KW-0819">tRNA processing</keyword>
<keyword id="KW-0820">tRNA-binding</keyword>
<gene>
    <name evidence="1" type="primary">rph</name>
    <name type="ordered locus">PSHAa2788</name>
</gene>
<reference key="1">
    <citation type="journal article" date="2005" name="Genome Res.">
        <title>Coping with cold: the genome of the versatile marine Antarctica bacterium Pseudoalteromonas haloplanktis TAC125.</title>
        <authorList>
            <person name="Medigue C."/>
            <person name="Krin E."/>
            <person name="Pascal G."/>
            <person name="Barbe V."/>
            <person name="Bernsel A."/>
            <person name="Bertin P.N."/>
            <person name="Cheung F."/>
            <person name="Cruveiller S."/>
            <person name="D'Amico S."/>
            <person name="Duilio A."/>
            <person name="Fang G."/>
            <person name="Feller G."/>
            <person name="Ho C."/>
            <person name="Mangenot S."/>
            <person name="Marino G."/>
            <person name="Nilsson J."/>
            <person name="Parrilli E."/>
            <person name="Rocha E.P.C."/>
            <person name="Rouy Z."/>
            <person name="Sekowska A."/>
            <person name="Tutino M.L."/>
            <person name="Vallenet D."/>
            <person name="von Heijne G."/>
            <person name="Danchin A."/>
        </authorList>
    </citation>
    <scope>NUCLEOTIDE SEQUENCE [LARGE SCALE GENOMIC DNA]</scope>
    <source>
        <strain>TAC 125</strain>
    </source>
</reference>
<name>RNPH_PSET1</name>